<protein>
    <recommendedName>
        <fullName evidence="1">tRNA N6-adenosine threonylcarbamoyltransferase</fullName>
        <ecNumber evidence="1">2.3.1.234</ecNumber>
    </recommendedName>
    <alternativeName>
        <fullName evidence="1">N6-L-threonylcarbamoyladenine synthase</fullName>
        <shortName evidence="1">t(6)A synthase</shortName>
    </alternativeName>
    <alternativeName>
        <fullName evidence="1">t(6)A37 threonylcarbamoyladenosine biosynthesis protein Kae1</fullName>
    </alternativeName>
    <alternativeName>
        <fullName evidence="1">tRNA threonylcarbamoyladenosine biosynthesis protein Kae1</fullName>
    </alternativeName>
</protein>
<organism>
    <name type="scientific">Caldivirga maquilingensis (strain ATCC 700844 / DSM 13496 / JCM 10307 / IC-167)</name>
    <dbReference type="NCBI Taxonomy" id="397948"/>
    <lineage>
        <taxon>Archaea</taxon>
        <taxon>Thermoproteota</taxon>
        <taxon>Thermoprotei</taxon>
        <taxon>Thermoproteales</taxon>
        <taxon>Thermoproteaceae</taxon>
        <taxon>Caldivirga</taxon>
    </lineage>
</organism>
<sequence>MIILGIESTAHTIGVGIVNDNEVLANENETYTPPQGSGIHPREAADHHALKASHLVKRALDKAEVKLSDLDAVAFSQGPGLGPALRVGATVARFIAIKYGKPLVPVHHGVAHIEIAKMTTGAKDPLVLLVSGGHTMVTAYSGGRYRVFGETMDISVGNCLDMFARFLGLPNPGVPHLEECARRGKVMLELPYTVKGQDMSFAGLYTAAVKLVKEGRRVENVCLSIVNTAYYMLAEVTERALALLGKREIVIAGGVARSPILRSIMEIVASEYTATLHVVPPEYAGDNGAMIAWTGLLAYKSGVSISIEDSVIKQRWRIDEVPIPWITSTVS</sequence>
<name>KAE1_CALMQ</name>
<reference key="1">
    <citation type="submission" date="2007-10" db="EMBL/GenBank/DDBJ databases">
        <title>Complete sequence of Caldivirga maquilingensis IC-167.</title>
        <authorList>
            <consortium name="US DOE Joint Genome Institute"/>
            <person name="Copeland A."/>
            <person name="Lucas S."/>
            <person name="Lapidus A."/>
            <person name="Barry K."/>
            <person name="Glavina del Rio T."/>
            <person name="Dalin E."/>
            <person name="Tice H."/>
            <person name="Pitluck S."/>
            <person name="Saunders E."/>
            <person name="Brettin T."/>
            <person name="Bruce D."/>
            <person name="Detter J.C."/>
            <person name="Han C."/>
            <person name="Schmutz J."/>
            <person name="Larimer F."/>
            <person name="Land M."/>
            <person name="Hauser L."/>
            <person name="Kyrpides N."/>
            <person name="Ivanova N."/>
            <person name="Biddle J.F."/>
            <person name="Zhang Z."/>
            <person name="Fitz-Gibbon S.T."/>
            <person name="Lowe T.M."/>
            <person name="Saltikov C."/>
            <person name="House C.H."/>
            <person name="Richardson P."/>
        </authorList>
    </citation>
    <scope>NUCLEOTIDE SEQUENCE [LARGE SCALE GENOMIC DNA]</scope>
    <source>
        <strain>ATCC 700844 / DSM 13496 / JCM 10307 / IC-167</strain>
    </source>
</reference>
<gene>
    <name evidence="1" type="primary">kae1</name>
    <name type="ordered locus">Cmaq_0593</name>
</gene>
<proteinExistence type="inferred from homology"/>
<comment type="function">
    <text evidence="1">Required for the formation of a threonylcarbamoyl group on adenosine at position 37 (t(6)A37) in tRNAs that read codons beginning with adenine. Is probably involved in the transfer of the threonylcarbamoyl moiety of threonylcarbamoyl-AMP (TC-AMP) to the N6 group of A37.</text>
</comment>
<comment type="catalytic activity">
    <reaction evidence="1">
        <text>L-threonylcarbamoyladenylate + adenosine(37) in tRNA = N(6)-L-threonylcarbamoyladenosine(37) in tRNA + AMP + H(+)</text>
        <dbReference type="Rhea" id="RHEA:37059"/>
        <dbReference type="Rhea" id="RHEA-COMP:10162"/>
        <dbReference type="Rhea" id="RHEA-COMP:10163"/>
        <dbReference type="ChEBI" id="CHEBI:15378"/>
        <dbReference type="ChEBI" id="CHEBI:73682"/>
        <dbReference type="ChEBI" id="CHEBI:74411"/>
        <dbReference type="ChEBI" id="CHEBI:74418"/>
        <dbReference type="ChEBI" id="CHEBI:456215"/>
        <dbReference type="EC" id="2.3.1.234"/>
    </reaction>
</comment>
<comment type="cofactor">
    <cofactor evidence="1">
        <name>Fe(2+)</name>
        <dbReference type="ChEBI" id="CHEBI:29033"/>
    </cofactor>
    <text evidence="1">Binds 1 Fe(2+) ion per subunit.</text>
</comment>
<comment type="subcellular location">
    <subcellularLocation>
        <location evidence="1">Cytoplasm</location>
    </subcellularLocation>
</comment>
<comment type="similarity">
    <text evidence="1">Belongs to the KAE1 / TsaD family.</text>
</comment>
<dbReference type="EC" id="2.3.1.234" evidence="1"/>
<dbReference type="EMBL" id="CP000852">
    <property type="protein sequence ID" value="ABW01434.1"/>
    <property type="molecule type" value="Genomic_DNA"/>
</dbReference>
<dbReference type="RefSeq" id="WP_012185654.1">
    <property type="nucleotide sequence ID" value="NC_009954.1"/>
</dbReference>
<dbReference type="SMR" id="A8MCC8"/>
<dbReference type="STRING" id="397948.Cmaq_0593"/>
<dbReference type="GeneID" id="5709352"/>
<dbReference type="KEGG" id="cma:Cmaq_0593"/>
<dbReference type="eggNOG" id="arCOG01183">
    <property type="taxonomic scope" value="Archaea"/>
</dbReference>
<dbReference type="HOGENOM" id="CLU_023208_2_2_2"/>
<dbReference type="OrthoDB" id="6818at2157"/>
<dbReference type="Proteomes" id="UP000001137">
    <property type="component" value="Chromosome"/>
</dbReference>
<dbReference type="GO" id="GO:0005737">
    <property type="term" value="C:cytoplasm"/>
    <property type="evidence" value="ECO:0007669"/>
    <property type="project" value="UniProtKB-SubCell"/>
</dbReference>
<dbReference type="GO" id="GO:0000408">
    <property type="term" value="C:EKC/KEOPS complex"/>
    <property type="evidence" value="ECO:0007669"/>
    <property type="project" value="InterPro"/>
</dbReference>
<dbReference type="GO" id="GO:0005506">
    <property type="term" value="F:iron ion binding"/>
    <property type="evidence" value="ECO:0007669"/>
    <property type="project" value="UniProtKB-UniRule"/>
</dbReference>
<dbReference type="GO" id="GO:0061711">
    <property type="term" value="F:N(6)-L-threonylcarbamoyladenine synthase activity"/>
    <property type="evidence" value="ECO:0007669"/>
    <property type="project" value="UniProtKB-EC"/>
</dbReference>
<dbReference type="GO" id="GO:0002949">
    <property type="term" value="P:tRNA threonylcarbamoyladenosine modification"/>
    <property type="evidence" value="ECO:0007669"/>
    <property type="project" value="UniProtKB-UniRule"/>
</dbReference>
<dbReference type="CDD" id="cd24131">
    <property type="entry name" value="ASKHA_NBD_Kae1_arch_bac"/>
    <property type="match status" value="1"/>
</dbReference>
<dbReference type="FunFam" id="3.30.420.40:FF:000037">
    <property type="entry name" value="Probable tRNA N6-adenosine threonylcarbamoyltransferase"/>
    <property type="match status" value="1"/>
</dbReference>
<dbReference type="Gene3D" id="3.30.420.40">
    <property type="match status" value="2"/>
</dbReference>
<dbReference type="HAMAP" id="MF_01446">
    <property type="entry name" value="Kae1"/>
    <property type="match status" value="1"/>
</dbReference>
<dbReference type="InterPro" id="IPR043129">
    <property type="entry name" value="ATPase_NBD"/>
</dbReference>
<dbReference type="InterPro" id="IPR000905">
    <property type="entry name" value="Gcp-like_dom"/>
</dbReference>
<dbReference type="InterPro" id="IPR017861">
    <property type="entry name" value="KAE1/TsaD"/>
</dbReference>
<dbReference type="InterPro" id="IPR034680">
    <property type="entry name" value="Kae1_archaea_euk"/>
</dbReference>
<dbReference type="NCBIfam" id="TIGR03722">
    <property type="entry name" value="arch_KAE1"/>
    <property type="match status" value="1"/>
</dbReference>
<dbReference type="NCBIfam" id="TIGR00329">
    <property type="entry name" value="gcp_kae1"/>
    <property type="match status" value="1"/>
</dbReference>
<dbReference type="PANTHER" id="PTHR11735">
    <property type="entry name" value="TRNA N6-ADENOSINE THREONYLCARBAMOYLTRANSFERASE"/>
    <property type="match status" value="1"/>
</dbReference>
<dbReference type="PANTHER" id="PTHR11735:SF14">
    <property type="entry name" value="TRNA N6-ADENOSINE THREONYLCARBAMOYLTRANSFERASE"/>
    <property type="match status" value="1"/>
</dbReference>
<dbReference type="Pfam" id="PF00814">
    <property type="entry name" value="TsaD"/>
    <property type="match status" value="1"/>
</dbReference>
<dbReference type="PRINTS" id="PR00789">
    <property type="entry name" value="OSIALOPTASE"/>
</dbReference>
<dbReference type="SUPFAM" id="SSF53067">
    <property type="entry name" value="Actin-like ATPase domain"/>
    <property type="match status" value="1"/>
</dbReference>
<keyword id="KW-0012">Acyltransferase</keyword>
<keyword id="KW-0963">Cytoplasm</keyword>
<keyword id="KW-0408">Iron</keyword>
<keyword id="KW-0479">Metal-binding</keyword>
<keyword id="KW-1185">Reference proteome</keyword>
<keyword id="KW-0808">Transferase</keyword>
<keyword id="KW-0819">tRNA processing</keyword>
<evidence type="ECO:0000255" key="1">
    <source>
        <dbReference type="HAMAP-Rule" id="MF_01446"/>
    </source>
</evidence>
<feature type="chain" id="PRO_1000087498" description="tRNA N6-adenosine threonylcarbamoyltransferase">
    <location>
        <begin position="1"/>
        <end position="331"/>
    </location>
</feature>
<feature type="binding site" evidence="1">
    <location>
        <position position="108"/>
    </location>
    <ligand>
        <name>Fe cation</name>
        <dbReference type="ChEBI" id="CHEBI:24875"/>
    </ligand>
</feature>
<feature type="binding site" evidence="1">
    <location>
        <position position="112"/>
    </location>
    <ligand>
        <name>Fe cation</name>
        <dbReference type="ChEBI" id="CHEBI:24875"/>
    </ligand>
</feature>
<feature type="binding site" evidence="1">
    <location>
        <begin position="129"/>
        <end position="133"/>
    </location>
    <ligand>
        <name>substrate</name>
    </ligand>
</feature>
<feature type="binding site" evidence="1">
    <location>
        <position position="161"/>
    </location>
    <ligand>
        <name>substrate</name>
    </ligand>
</feature>
<feature type="binding site" evidence="1">
    <location>
        <position position="178"/>
    </location>
    <ligand>
        <name>substrate</name>
    </ligand>
</feature>
<feature type="binding site" evidence="1">
    <location>
        <position position="258"/>
    </location>
    <ligand>
        <name>substrate</name>
    </ligand>
</feature>
<feature type="binding site" evidence="1">
    <location>
        <position position="286"/>
    </location>
    <ligand>
        <name>Fe cation</name>
        <dbReference type="ChEBI" id="CHEBI:24875"/>
    </ligand>
</feature>
<accession>A8MCC8</accession>